<protein>
    <recommendedName>
        <fullName evidence="4">Dual specificity protein phosphatase MPK-4</fullName>
        <ecNumber evidence="3">3.1.3.16</ecNumber>
        <ecNumber evidence="3">3.1.3.48</ecNumber>
    </recommendedName>
</protein>
<organism evidence="10">
    <name type="scientific">Drosophila melanogaster</name>
    <name type="common">Fruit fly</name>
    <dbReference type="NCBI Taxonomy" id="7227"/>
    <lineage>
        <taxon>Eukaryota</taxon>
        <taxon>Metazoa</taxon>
        <taxon>Ecdysozoa</taxon>
        <taxon>Arthropoda</taxon>
        <taxon>Hexapoda</taxon>
        <taxon>Insecta</taxon>
        <taxon>Pterygota</taxon>
        <taxon>Neoptera</taxon>
        <taxon>Endopterygota</taxon>
        <taxon>Diptera</taxon>
        <taxon>Brachycera</taxon>
        <taxon>Muscomorpha</taxon>
        <taxon>Ephydroidea</taxon>
        <taxon>Drosophilidae</taxon>
        <taxon>Drosophila</taxon>
        <taxon>Sophophora</taxon>
    </lineage>
</organism>
<comment type="function">
    <text evidence="3">Dual specificity phosphatase; can dephosphorylate both phosphotyrosine and phosphoserine or phosphothreonine residues. May suppress bsk/JNK activation during the immune response.</text>
</comment>
<comment type="catalytic activity">
    <reaction evidence="3">
        <text>O-phospho-L-tyrosyl-[protein] + H2O = L-tyrosyl-[protein] + phosphate</text>
        <dbReference type="Rhea" id="RHEA:10684"/>
        <dbReference type="Rhea" id="RHEA-COMP:10136"/>
        <dbReference type="Rhea" id="RHEA-COMP:20101"/>
        <dbReference type="ChEBI" id="CHEBI:15377"/>
        <dbReference type="ChEBI" id="CHEBI:43474"/>
        <dbReference type="ChEBI" id="CHEBI:46858"/>
        <dbReference type="ChEBI" id="CHEBI:61978"/>
        <dbReference type="EC" id="3.1.3.48"/>
    </reaction>
</comment>
<comment type="catalytic activity">
    <reaction evidence="3">
        <text>O-phospho-L-seryl-[protein] + H2O = L-seryl-[protein] + phosphate</text>
        <dbReference type="Rhea" id="RHEA:20629"/>
        <dbReference type="Rhea" id="RHEA-COMP:9863"/>
        <dbReference type="Rhea" id="RHEA-COMP:11604"/>
        <dbReference type="ChEBI" id="CHEBI:15377"/>
        <dbReference type="ChEBI" id="CHEBI:29999"/>
        <dbReference type="ChEBI" id="CHEBI:43474"/>
        <dbReference type="ChEBI" id="CHEBI:83421"/>
        <dbReference type="EC" id="3.1.3.16"/>
    </reaction>
</comment>
<comment type="catalytic activity">
    <reaction evidence="3">
        <text>O-phospho-L-threonyl-[protein] + H2O = L-threonyl-[protein] + phosphate</text>
        <dbReference type="Rhea" id="RHEA:47004"/>
        <dbReference type="Rhea" id="RHEA-COMP:11060"/>
        <dbReference type="Rhea" id="RHEA-COMP:11605"/>
        <dbReference type="ChEBI" id="CHEBI:15377"/>
        <dbReference type="ChEBI" id="CHEBI:30013"/>
        <dbReference type="ChEBI" id="CHEBI:43474"/>
        <dbReference type="ChEBI" id="CHEBI:61977"/>
        <dbReference type="EC" id="3.1.3.16"/>
    </reaction>
</comment>
<comment type="activity regulation">
    <text evidence="3">Inhibited by the tyrosine phosphatase inhibitor sodium vanadate.</text>
</comment>
<comment type="subunit">
    <text evidence="3">Interacts (via tyrosine-protein phosphatase domain) with bsk/JNK; the interaction dephosphorylates bsk.</text>
</comment>
<comment type="subcellular location">
    <subcellularLocation>
        <location evidence="3">Nucleus</location>
    </subcellularLocation>
    <subcellularLocation>
        <location evidence="3">Cytoplasm</location>
    </subcellularLocation>
    <text evidence="3">Mainly found in the nucleus.</text>
</comment>
<comment type="similarity">
    <text evidence="5">Belongs to the protein-tyrosine phosphatase family. Non-receptor class dual specificity subfamily.</text>
</comment>
<comment type="sequence caution" evidence="5">
    <conflict type="erroneous translation">
        <sequence resource="EMBL-CDS" id="AAL13359"/>
    </conflict>
    <text>Wrong choice of frame.</text>
</comment>
<accession>Q9VWF4</accession>
<accession>Q95TD9</accession>
<feature type="chain" id="PRO_0000439451" description="Dual specificity protein phosphatase MPK-4">
    <location>
        <begin position="1"/>
        <end position="387"/>
    </location>
</feature>
<feature type="domain" description="Tyrosine-protein phosphatase" evidence="1">
    <location>
        <begin position="35"/>
        <end position="182"/>
    </location>
</feature>
<feature type="region of interest" description="Disordered" evidence="2">
    <location>
        <begin position="1"/>
        <end position="27"/>
    </location>
</feature>
<feature type="region of interest" description="Disordered" evidence="2">
    <location>
        <begin position="248"/>
        <end position="267"/>
    </location>
</feature>
<feature type="compositionally biased region" description="Polar residues" evidence="2">
    <location>
        <begin position="1"/>
        <end position="15"/>
    </location>
</feature>
<feature type="active site" description="Phosphocysteine intermediate" evidence="1 6">
    <location>
        <position position="126"/>
    </location>
</feature>
<feature type="mutagenesis site" description="Abolishes phosphatase activity. Loss of bsk/JNK binding. Reduced nuclear localization." evidence="3">
    <original>C</original>
    <variation>S</variation>
    <location>
        <position position="126"/>
    </location>
</feature>
<evidence type="ECO:0000255" key="1">
    <source>
        <dbReference type="PROSITE-ProRule" id="PRU00160"/>
    </source>
</evidence>
<evidence type="ECO:0000256" key="2">
    <source>
        <dbReference type="SAM" id="MobiDB-lite"/>
    </source>
</evidence>
<evidence type="ECO:0000269" key="3">
    <source>
    </source>
</evidence>
<evidence type="ECO:0000303" key="4">
    <source>
    </source>
</evidence>
<evidence type="ECO:0000305" key="5"/>
<evidence type="ECO:0000305" key="6">
    <source>
    </source>
</evidence>
<evidence type="ECO:0000312" key="7">
    <source>
        <dbReference type="EMBL" id="AAL13359.1"/>
    </source>
</evidence>
<evidence type="ECO:0000312" key="8">
    <source>
        <dbReference type="EMBL" id="ABX00756.1"/>
    </source>
</evidence>
<evidence type="ECO:0000312" key="9">
    <source>
        <dbReference type="FlyBase" id="FBgn0031044"/>
    </source>
</evidence>
<evidence type="ECO:0000312" key="10">
    <source>
        <dbReference type="Proteomes" id="UP000000803"/>
    </source>
</evidence>
<proteinExistence type="evidence at protein level"/>
<gene>
    <name evidence="4" type="primary">MKP-4</name>
    <name evidence="9" type="ORF">CG14211</name>
</gene>
<reference evidence="10" key="1">
    <citation type="journal article" date="2000" name="Science">
        <title>The genome sequence of Drosophila melanogaster.</title>
        <authorList>
            <person name="Adams M.D."/>
            <person name="Celniker S.E."/>
            <person name="Holt R.A."/>
            <person name="Evans C.A."/>
            <person name="Gocayne J.D."/>
            <person name="Amanatides P.G."/>
            <person name="Scherer S.E."/>
            <person name="Li P.W."/>
            <person name="Hoskins R.A."/>
            <person name="Galle R.F."/>
            <person name="George R.A."/>
            <person name="Lewis S.E."/>
            <person name="Richards S."/>
            <person name="Ashburner M."/>
            <person name="Henderson S.N."/>
            <person name="Sutton G.G."/>
            <person name="Wortman J.R."/>
            <person name="Yandell M.D."/>
            <person name="Zhang Q."/>
            <person name="Chen L.X."/>
            <person name="Brandon R.C."/>
            <person name="Rogers Y.-H.C."/>
            <person name="Blazej R.G."/>
            <person name="Champe M."/>
            <person name="Pfeiffer B.D."/>
            <person name="Wan K.H."/>
            <person name="Doyle C."/>
            <person name="Baxter E.G."/>
            <person name="Helt G."/>
            <person name="Nelson C.R."/>
            <person name="Miklos G.L.G."/>
            <person name="Abril J.F."/>
            <person name="Agbayani A."/>
            <person name="An H.-J."/>
            <person name="Andrews-Pfannkoch C."/>
            <person name="Baldwin D."/>
            <person name="Ballew R.M."/>
            <person name="Basu A."/>
            <person name="Baxendale J."/>
            <person name="Bayraktaroglu L."/>
            <person name="Beasley E.M."/>
            <person name="Beeson K.Y."/>
            <person name="Benos P.V."/>
            <person name="Berman B.P."/>
            <person name="Bhandari D."/>
            <person name="Bolshakov S."/>
            <person name="Borkova D."/>
            <person name="Botchan M.R."/>
            <person name="Bouck J."/>
            <person name="Brokstein P."/>
            <person name="Brottier P."/>
            <person name="Burtis K.C."/>
            <person name="Busam D.A."/>
            <person name="Butler H."/>
            <person name="Cadieu E."/>
            <person name="Center A."/>
            <person name="Chandra I."/>
            <person name="Cherry J.M."/>
            <person name="Cawley S."/>
            <person name="Dahlke C."/>
            <person name="Davenport L.B."/>
            <person name="Davies P."/>
            <person name="de Pablos B."/>
            <person name="Delcher A."/>
            <person name="Deng Z."/>
            <person name="Mays A.D."/>
            <person name="Dew I."/>
            <person name="Dietz S.M."/>
            <person name="Dodson K."/>
            <person name="Doup L.E."/>
            <person name="Downes M."/>
            <person name="Dugan-Rocha S."/>
            <person name="Dunkov B.C."/>
            <person name="Dunn P."/>
            <person name="Durbin K.J."/>
            <person name="Evangelista C.C."/>
            <person name="Ferraz C."/>
            <person name="Ferriera S."/>
            <person name="Fleischmann W."/>
            <person name="Fosler C."/>
            <person name="Gabrielian A.E."/>
            <person name="Garg N.S."/>
            <person name="Gelbart W.M."/>
            <person name="Glasser K."/>
            <person name="Glodek A."/>
            <person name="Gong F."/>
            <person name="Gorrell J.H."/>
            <person name="Gu Z."/>
            <person name="Guan P."/>
            <person name="Harris M."/>
            <person name="Harris N.L."/>
            <person name="Harvey D.A."/>
            <person name="Heiman T.J."/>
            <person name="Hernandez J.R."/>
            <person name="Houck J."/>
            <person name="Hostin D."/>
            <person name="Houston K.A."/>
            <person name="Howland T.J."/>
            <person name="Wei M.-H."/>
            <person name="Ibegwam C."/>
            <person name="Jalali M."/>
            <person name="Kalush F."/>
            <person name="Karpen G.H."/>
            <person name="Ke Z."/>
            <person name="Kennison J.A."/>
            <person name="Ketchum K.A."/>
            <person name="Kimmel B.E."/>
            <person name="Kodira C.D."/>
            <person name="Kraft C.L."/>
            <person name="Kravitz S."/>
            <person name="Kulp D."/>
            <person name="Lai Z."/>
            <person name="Lasko P."/>
            <person name="Lei Y."/>
            <person name="Levitsky A.A."/>
            <person name="Li J.H."/>
            <person name="Li Z."/>
            <person name="Liang Y."/>
            <person name="Lin X."/>
            <person name="Liu X."/>
            <person name="Mattei B."/>
            <person name="McIntosh T.C."/>
            <person name="McLeod M.P."/>
            <person name="McPherson D."/>
            <person name="Merkulov G."/>
            <person name="Milshina N.V."/>
            <person name="Mobarry C."/>
            <person name="Morris J."/>
            <person name="Moshrefi A."/>
            <person name="Mount S.M."/>
            <person name="Moy M."/>
            <person name="Murphy B."/>
            <person name="Murphy L."/>
            <person name="Muzny D.M."/>
            <person name="Nelson D.L."/>
            <person name="Nelson D.R."/>
            <person name="Nelson K.A."/>
            <person name="Nixon K."/>
            <person name="Nusskern D.R."/>
            <person name="Pacleb J.M."/>
            <person name="Palazzolo M."/>
            <person name="Pittman G.S."/>
            <person name="Pan S."/>
            <person name="Pollard J."/>
            <person name="Puri V."/>
            <person name="Reese M.G."/>
            <person name="Reinert K."/>
            <person name="Remington K."/>
            <person name="Saunders R.D.C."/>
            <person name="Scheeler F."/>
            <person name="Shen H."/>
            <person name="Shue B.C."/>
            <person name="Siden-Kiamos I."/>
            <person name="Simpson M."/>
            <person name="Skupski M.P."/>
            <person name="Smith T.J."/>
            <person name="Spier E."/>
            <person name="Spradling A.C."/>
            <person name="Stapleton M."/>
            <person name="Strong R."/>
            <person name="Sun E."/>
            <person name="Svirskas R."/>
            <person name="Tector C."/>
            <person name="Turner R."/>
            <person name="Venter E."/>
            <person name="Wang A.H."/>
            <person name="Wang X."/>
            <person name="Wang Z.-Y."/>
            <person name="Wassarman D.A."/>
            <person name="Weinstock G.M."/>
            <person name="Weissenbach J."/>
            <person name="Williams S.M."/>
            <person name="Woodage T."/>
            <person name="Worley K.C."/>
            <person name="Wu D."/>
            <person name="Yang S."/>
            <person name="Yao Q.A."/>
            <person name="Ye J."/>
            <person name="Yeh R.-F."/>
            <person name="Zaveri J.S."/>
            <person name="Zhan M."/>
            <person name="Zhang G."/>
            <person name="Zhao Q."/>
            <person name="Zheng L."/>
            <person name="Zheng X.H."/>
            <person name="Zhong F.N."/>
            <person name="Zhong W."/>
            <person name="Zhou X."/>
            <person name="Zhu S.C."/>
            <person name="Zhu X."/>
            <person name="Smith H.O."/>
            <person name="Gibbs R.A."/>
            <person name="Myers E.W."/>
            <person name="Rubin G.M."/>
            <person name="Venter J.C."/>
        </authorList>
    </citation>
    <scope>NUCLEOTIDE SEQUENCE [LARGE SCALE GENOMIC DNA]</scope>
    <source>
        <strain evidence="10">Berkeley</strain>
    </source>
</reference>
<reference evidence="10" key="2">
    <citation type="journal article" date="2002" name="Genome Biol.">
        <title>Annotation of the Drosophila melanogaster euchromatic genome: a systematic review.</title>
        <authorList>
            <person name="Misra S."/>
            <person name="Crosby M.A."/>
            <person name="Mungall C.J."/>
            <person name="Matthews B.B."/>
            <person name="Campbell K.S."/>
            <person name="Hradecky P."/>
            <person name="Huang Y."/>
            <person name="Kaminker J.S."/>
            <person name="Millburn G.H."/>
            <person name="Prochnik S.E."/>
            <person name="Smith C.D."/>
            <person name="Tupy J.L."/>
            <person name="Whitfield E.J."/>
            <person name="Bayraktaroglu L."/>
            <person name="Berman B.P."/>
            <person name="Bettencourt B.R."/>
            <person name="Celniker S.E."/>
            <person name="de Grey A.D.N.J."/>
            <person name="Drysdale R.A."/>
            <person name="Harris N.L."/>
            <person name="Richter J."/>
            <person name="Russo S."/>
            <person name="Schroeder A.J."/>
            <person name="Shu S.Q."/>
            <person name="Stapleton M."/>
            <person name="Yamada C."/>
            <person name="Ashburner M."/>
            <person name="Gelbart W.M."/>
            <person name="Rubin G.M."/>
            <person name="Lewis S.E."/>
        </authorList>
    </citation>
    <scope>GENOME REANNOTATION</scope>
    <source>
        <strain evidence="10">Berkeley</strain>
    </source>
</reference>
<reference evidence="8" key="3">
    <citation type="submission" date="2007-11" db="EMBL/GenBank/DDBJ databases">
        <authorList>
            <person name="Stapleton M."/>
            <person name="Carlson J."/>
            <person name="Frise E."/>
            <person name="Kapadia B."/>
            <person name="Park S."/>
            <person name="Wan K."/>
            <person name="Yu C."/>
            <person name="Celniker S."/>
        </authorList>
    </citation>
    <scope>NUCLEOTIDE SEQUENCE [LARGE SCALE MRNA]</scope>
    <source>
        <strain evidence="8">Berkeley</strain>
        <tissue evidence="8">Embryo</tissue>
    </source>
</reference>
<reference evidence="7" key="4">
    <citation type="journal article" date="2002" name="Genome Biol.">
        <title>A Drosophila full-length cDNA resource.</title>
        <authorList>
            <person name="Stapleton M."/>
            <person name="Carlson J.W."/>
            <person name="Brokstein P."/>
            <person name="Yu C."/>
            <person name="Champe M."/>
            <person name="George R.A."/>
            <person name="Guarin H."/>
            <person name="Kronmiller B."/>
            <person name="Pacleb J.M."/>
            <person name="Park S."/>
            <person name="Wan K.H."/>
            <person name="Rubin G.M."/>
            <person name="Celniker S.E."/>
        </authorList>
    </citation>
    <scope>NUCLEOTIDE SEQUENCE [LARGE SCALE MRNA] OF 314-387</scope>
    <source>
        <strain evidence="7">Berkeley</strain>
        <tissue evidence="7">Embryo</tissue>
    </source>
</reference>
<reference evidence="5" key="5">
    <citation type="journal article" date="2008" name="Cell. Signal.">
        <title>Molecular identification and functional characterization of a Drosophila dual-specificity phosphatase DMKP-4 which is involved in PGN-induced activation of the JNK pathway.</title>
        <authorList>
            <person name="Sun L."/>
            <person name="Yu M.C."/>
            <person name="Kong L."/>
            <person name="Zhuang Z.H."/>
            <person name="Hu J.H."/>
            <person name="Ge B.X."/>
        </authorList>
    </citation>
    <scope>FUNCTION</scope>
    <scope>CATALYTIC ACTIVITY</scope>
    <scope>ACTIVITY REGULATION</scope>
    <scope>INTERACTION WITH BSK</scope>
    <scope>SUBCELLULAR LOCATION</scope>
    <scope>MUTAGENESIS OF CYS-126</scope>
</reference>
<sequence>MEQSQSQRQAWPSSSAGGGKAQDSGVLTREDFDGGPVSIDEVDTGLFLGNLTAATHMETLRSFKITHILTLDSVPLPQHILEASFLTTKYIQIADMPREDILQHLEGCVDFISSALAQQGNVLVHCYFGVSRSSSTVIAYMMKRHNLDFLPAYELVKAKRRFVQPNAGFVSQLKLFRRMGCKIDPNCQRYKIHRLRLAGEQMRKAKILPQSFHSVVRPDPDITRENPEPIVFRCRRCRRVLASKSHVLEHKPRDRPPQEVVPKEKEEVAAAKLPAQSHDQAENHHGARMLEQLSERIRQSSLGSPGHESTPNYCRSILFVEPIAWMHRIMLNTQGRLYCPKCEQKLGNFSWINACKCPCGETMTPAFYLIPSKVELSKAVQNVQTTV</sequence>
<dbReference type="EC" id="3.1.3.16" evidence="3"/>
<dbReference type="EC" id="3.1.3.48" evidence="3"/>
<dbReference type="EMBL" id="AE014298">
    <property type="protein sequence ID" value="AAF48988.1"/>
    <property type="molecule type" value="Genomic_DNA"/>
</dbReference>
<dbReference type="EMBL" id="AE014298">
    <property type="protein sequence ID" value="AGB95557.1"/>
    <property type="molecule type" value="Genomic_DNA"/>
</dbReference>
<dbReference type="EMBL" id="BT031134">
    <property type="protein sequence ID" value="ABX00756.1"/>
    <property type="molecule type" value="mRNA"/>
</dbReference>
<dbReference type="EMBL" id="AY059453">
    <property type="protein sequence ID" value="AAL13359.1"/>
    <property type="status" value="ALT_SEQ"/>
    <property type="molecule type" value="mRNA"/>
</dbReference>
<dbReference type="RefSeq" id="NP_001259717.1">
    <property type="nucleotide sequence ID" value="NM_001272788.1"/>
</dbReference>
<dbReference type="RefSeq" id="NP_608332.2">
    <property type="nucleotide sequence ID" value="NM_134488.2"/>
</dbReference>
<dbReference type="SMR" id="Q9VWF4"/>
<dbReference type="FunCoup" id="Q9VWF4">
    <property type="interactions" value="2276"/>
</dbReference>
<dbReference type="IntAct" id="Q9VWF4">
    <property type="interactions" value="2"/>
</dbReference>
<dbReference type="STRING" id="7227.FBpp0074510"/>
<dbReference type="PaxDb" id="7227-FBpp0074510"/>
<dbReference type="DNASU" id="32963"/>
<dbReference type="EnsemblMetazoa" id="FBtr0074741">
    <property type="protein sequence ID" value="FBpp0074510"/>
    <property type="gene ID" value="FBgn0031044"/>
</dbReference>
<dbReference type="EnsemblMetazoa" id="FBtr0332481">
    <property type="protein sequence ID" value="FBpp0304757"/>
    <property type="gene ID" value="FBgn0031044"/>
</dbReference>
<dbReference type="GeneID" id="32963"/>
<dbReference type="KEGG" id="dme:Dmel_CG14211"/>
<dbReference type="UCSC" id="CG14211-RB">
    <property type="organism name" value="d. melanogaster"/>
</dbReference>
<dbReference type="AGR" id="FB:FBgn0031044"/>
<dbReference type="CTD" id="32963"/>
<dbReference type="FlyBase" id="FBgn0031044">
    <property type="gene designation" value="MKP-4"/>
</dbReference>
<dbReference type="VEuPathDB" id="VectorBase:FBgn0031044"/>
<dbReference type="eggNOG" id="KOG1716">
    <property type="taxonomic scope" value="Eukaryota"/>
</dbReference>
<dbReference type="HOGENOM" id="CLU_023312_1_0_1"/>
<dbReference type="InParanoid" id="Q9VWF4"/>
<dbReference type="OMA" id="FAWQGMQ"/>
<dbReference type="OrthoDB" id="2017893at2759"/>
<dbReference type="PhylomeDB" id="Q9VWF4"/>
<dbReference type="BioGRID-ORCS" id="32963">
    <property type="hits" value="0 hits in 3 CRISPR screens"/>
</dbReference>
<dbReference type="ChiTaRS" id="MKP-4">
    <property type="organism name" value="fly"/>
</dbReference>
<dbReference type="GenomeRNAi" id="32963"/>
<dbReference type="PRO" id="PR:Q9VWF4"/>
<dbReference type="Proteomes" id="UP000000803">
    <property type="component" value="Chromosome X"/>
</dbReference>
<dbReference type="Bgee" id="FBgn0031044">
    <property type="expression patterns" value="Expressed in egg cell and 62 other cell types or tissues"/>
</dbReference>
<dbReference type="GO" id="GO:0005737">
    <property type="term" value="C:cytoplasm"/>
    <property type="evidence" value="ECO:0007669"/>
    <property type="project" value="UniProtKB-SubCell"/>
</dbReference>
<dbReference type="GO" id="GO:0005634">
    <property type="term" value="C:nucleus"/>
    <property type="evidence" value="ECO:0000314"/>
    <property type="project" value="FlyBase"/>
</dbReference>
<dbReference type="GO" id="GO:0016791">
    <property type="term" value="F:phosphatase activity"/>
    <property type="evidence" value="ECO:0000314"/>
    <property type="project" value="FlyBase"/>
</dbReference>
<dbReference type="GO" id="GO:0004722">
    <property type="term" value="F:protein serine/threonine phosphatase activity"/>
    <property type="evidence" value="ECO:0007669"/>
    <property type="project" value="UniProtKB-EC"/>
</dbReference>
<dbReference type="GO" id="GO:0004725">
    <property type="term" value="F:protein tyrosine phosphatase activity"/>
    <property type="evidence" value="ECO:0007669"/>
    <property type="project" value="UniProtKB-EC"/>
</dbReference>
<dbReference type="GO" id="GO:0008138">
    <property type="term" value="F:protein tyrosine/serine/threonine phosphatase activity"/>
    <property type="evidence" value="ECO:0000318"/>
    <property type="project" value="GO_Central"/>
</dbReference>
<dbReference type="GO" id="GO:0043409">
    <property type="term" value="P:negative regulation of MAPK cascade"/>
    <property type="evidence" value="ECO:0000314"/>
    <property type="project" value="FlyBase"/>
</dbReference>
<dbReference type="CDD" id="cd14498">
    <property type="entry name" value="DSP"/>
    <property type="match status" value="1"/>
</dbReference>
<dbReference type="FunFam" id="3.90.190.10:FF:000056">
    <property type="entry name" value="Dual specificity phosphatase 12"/>
    <property type="match status" value="1"/>
</dbReference>
<dbReference type="Gene3D" id="3.90.190.10">
    <property type="entry name" value="Protein tyrosine phosphatase superfamily"/>
    <property type="match status" value="1"/>
</dbReference>
<dbReference type="InterPro" id="IPR000340">
    <property type="entry name" value="Dual-sp_phosphatase_cat-dom"/>
</dbReference>
<dbReference type="InterPro" id="IPR016278">
    <property type="entry name" value="DUSP12"/>
</dbReference>
<dbReference type="InterPro" id="IPR029021">
    <property type="entry name" value="Prot-tyrosine_phosphatase-like"/>
</dbReference>
<dbReference type="InterPro" id="IPR016130">
    <property type="entry name" value="Tyr_Pase_AS"/>
</dbReference>
<dbReference type="InterPro" id="IPR000387">
    <property type="entry name" value="Tyr_Pase_dom"/>
</dbReference>
<dbReference type="InterPro" id="IPR020422">
    <property type="entry name" value="TYR_PHOSPHATASE_DUAL_dom"/>
</dbReference>
<dbReference type="PANTHER" id="PTHR45848:SF4">
    <property type="entry name" value="DUAL SPECIFICITY PROTEIN PHOSPHATASE 12"/>
    <property type="match status" value="1"/>
</dbReference>
<dbReference type="PANTHER" id="PTHR45848">
    <property type="entry name" value="DUAL SPECIFICITY PROTEIN PHOSPHATASE 12 FAMILY MEMBER"/>
    <property type="match status" value="1"/>
</dbReference>
<dbReference type="Pfam" id="PF00782">
    <property type="entry name" value="DSPc"/>
    <property type="match status" value="1"/>
</dbReference>
<dbReference type="PIRSF" id="PIRSF000941">
    <property type="entry name" value="DUSP12"/>
    <property type="match status" value="1"/>
</dbReference>
<dbReference type="SMART" id="SM00195">
    <property type="entry name" value="DSPc"/>
    <property type="match status" value="1"/>
</dbReference>
<dbReference type="SUPFAM" id="SSF52799">
    <property type="entry name" value="(Phosphotyrosine protein) phosphatases II"/>
    <property type="match status" value="1"/>
</dbReference>
<dbReference type="PROSITE" id="PS00383">
    <property type="entry name" value="TYR_PHOSPHATASE_1"/>
    <property type="match status" value="1"/>
</dbReference>
<dbReference type="PROSITE" id="PS50056">
    <property type="entry name" value="TYR_PHOSPHATASE_2"/>
    <property type="match status" value="1"/>
</dbReference>
<dbReference type="PROSITE" id="PS50054">
    <property type="entry name" value="TYR_PHOSPHATASE_DUAL"/>
    <property type="match status" value="1"/>
</dbReference>
<keyword id="KW-0963">Cytoplasm</keyword>
<keyword id="KW-0378">Hydrolase</keyword>
<keyword id="KW-0539">Nucleus</keyword>
<keyword id="KW-0904">Protein phosphatase</keyword>
<keyword id="KW-1185">Reference proteome</keyword>
<name>DUSK4_DROME</name>